<accession>D4ANR0</accession>
<gene>
    <name type="primary">MIC60</name>
    <name type="ORF">ARB_05877</name>
</gene>
<name>MIC60_ARTBC</name>
<proteinExistence type="inferred from homology"/>
<evidence type="ECO:0000250" key="1"/>
<evidence type="ECO:0000255" key="2"/>
<evidence type="ECO:0000256" key="3">
    <source>
        <dbReference type="SAM" id="MobiDB-lite"/>
    </source>
</evidence>
<evidence type="ECO:0000305" key="4"/>
<protein>
    <recommendedName>
        <fullName>MICOS complex subunit MIC60</fullName>
    </recommendedName>
    <alternativeName>
        <fullName>Mitofilin</fullName>
    </alternativeName>
</protein>
<comment type="function">
    <text evidence="1">Component of the MICOS complex, a large protein complex of the mitochondrial inner membrane that plays crucial roles in the maintenance of crista junctions, inner membrane architecture, and formation of contact sites to the outer membrane. Plays a role in keeping cristae membranes connected to the inner boundary membrane. Also promotes protein import via the mitochondrial intermembrane space assembly (MIA) pathway (By similarity).</text>
</comment>
<comment type="subunit">
    <text evidence="1">Component of the mitochondrial contact site and cristae organizing system (MICOS) complex.</text>
</comment>
<comment type="subcellular location">
    <subcellularLocation>
        <location evidence="1">Mitochondrion inner membrane</location>
        <topology evidence="1">Single-pass membrane protein</topology>
    </subcellularLocation>
</comment>
<comment type="similarity">
    <text evidence="4">Belongs to the MICOS complex subunit Mic60 family.</text>
</comment>
<organism>
    <name type="scientific">Arthroderma benhamiae (strain ATCC MYA-4681 / CBS 112371)</name>
    <name type="common">Trichophyton mentagrophytes</name>
    <dbReference type="NCBI Taxonomy" id="663331"/>
    <lineage>
        <taxon>Eukaryota</taxon>
        <taxon>Fungi</taxon>
        <taxon>Dikarya</taxon>
        <taxon>Ascomycota</taxon>
        <taxon>Pezizomycotina</taxon>
        <taxon>Eurotiomycetes</taxon>
        <taxon>Eurotiomycetidae</taxon>
        <taxon>Onygenales</taxon>
        <taxon>Arthrodermataceae</taxon>
        <taxon>Trichophyton</taxon>
    </lineage>
</organism>
<reference key="1">
    <citation type="journal article" date="2011" name="Genome Biol.">
        <title>Comparative and functional genomics provide insights into the pathogenicity of dermatophytic fungi.</title>
        <authorList>
            <person name="Burmester A."/>
            <person name="Shelest E."/>
            <person name="Gloeckner G."/>
            <person name="Heddergott C."/>
            <person name="Schindler S."/>
            <person name="Staib P."/>
            <person name="Heidel A."/>
            <person name="Felder M."/>
            <person name="Petzold A."/>
            <person name="Szafranski K."/>
            <person name="Feuermann M."/>
            <person name="Pedruzzi I."/>
            <person name="Priebe S."/>
            <person name="Groth M."/>
            <person name="Winkler R."/>
            <person name="Li W."/>
            <person name="Kniemeyer O."/>
            <person name="Schroeckh V."/>
            <person name="Hertweck C."/>
            <person name="Hube B."/>
            <person name="White T.C."/>
            <person name="Platzer M."/>
            <person name="Guthke R."/>
            <person name="Heitman J."/>
            <person name="Woestemeyer J."/>
            <person name="Zipfel P.F."/>
            <person name="Monod M."/>
            <person name="Brakhage A.A."/>
        </authorList>
    </citation>
    <scope>NUCLEOTIDE SEQUENCE [LARGE SCALE GENOMIC DNA]</scope>
    <source>
        <strain>ATCC MYA-4681 / CBS 112371</strain>
    </source>
</reference>
<feature type="transit peptide" description="Mitochondrion" evidence="2">
    <location>
        <begin position="1"/>
        <end position="11"/>
    </location>
</feature>
<feature type="chain" id="PRO_0000406642" description="MICOS complex subunit MIC60">
    <location>
        <begin position="12"/>
        <end position="684"/>
    </location>
</feature>
<feature type="topological domain" description="Mitochondrial matrix" evidence="2">
    <location>
        <begin position="12"/>
        <end position="140"/>
    </location>
</feature>
<feature type="transmembrane region" description="Helical" evidence="2">
    <location>
        <begin position="141"/>
        <end position="161"/>
    </location>
</feature>
<feature type="topological domain" description="Mitochondrial intermembrane" evidence="2">
    <location>
        <begin position="162"/>
        <end position="684"/>
    </location>
</feature>
<feature type="region of interest" description="Disordered" evidence="3">
    <location>
        <begin position="61"/>
        <end position="135"/>
    </location>
</feature>
<feature type="region of interest" description="Disordered" evidence="3">
    <location>
        <begin position="200"/>
        <end position="301"/>
    </location>
</feature>
<feature type="coiled-coil region" evidence="2">
    <location>
        <begin position="367"/>
        <end position="445"/>
    </location>
</feature>
<feature type="compositionally biased region" description="Polar residues" evidence="3">
    <location>
        <begin position="61"/>
        <end position="74"/>
    </location>
</feature>
<feature type="compositionally biased region" description="Polar residues" evidence="3">
    <location>
        <begin position="93"/>
        <end position="110"/>
    </location>
</feature>
<feature type="compositionally biased region" description="Pro residues" evidence="3">
    <location>
        <begin position="120"/>
        <end position="132"/>
    </location>
</feature>
<feature type="compositionally biased region" description="Basic and acidic residues" evidence="3">
    <location>
        <begin position="264"/>
        <end position="301"/>
    </location>
</feature>
<dbReference type="EMBL" id="ABSU01000004">
    <property type="protein sequence ID" value="EFE34921.1"/>
    <property type="molecule type" value="Genomic_DNA"/>
</dbReference>
<dbReference type="RefSeq" id="XP_003015566.1">
    <property type="nucleotide sequence ID" value="XM_003015520.1"/>
</dbReference>
<dbReference type="SMR" id="D4ANR0"/>
<dbReference type="STRING" id="663331.D4ANR0"/>
<dbReference type="GeneID" id="9526252"/>
<dbReference type="KEGG" id="abe:ARB_05877"/>
<dbReference type="eggNOG" id="KOG1854">
    <property type="taxonomic scope" value="Eukaryota"/>
</dbReference>
<dbReference type="HOGENOM" id="CLU_008024_1_2_1"/>
<dbReference type="OMA" id="RLDHQMQ"/>
<dbReference type="Proteomes" id="UP000008866">
    <property type="component" value="Unassembled WGS sequence"/>
</dbReference>
<dbReference type="GO" id="GO:0061617">
    <property type="term" value="C:MICOS complex"/>
    <property type="evidence" value="ECO:0007669"/>
    <property type="project" value="TreeGrafter"/>
</dbReference>
<dbReference type="GO" id="GO:0042407">
    <property type="term" value="P:cristae formation"/>
    <property type="evidence" value="ECO:0007669"/>
    <property type="project" value="TreeGrafter"/>
</dbReference>
<dbReference type="InterPro" id="IPR019133">
    <property type="entry name" value="MIC60"/>
</dbReference>
<dbReference type="PANTHER" id="PTHR15415:SF7">
    <property type="entry name" value="MICOS COMPLEX SUBUNIT MIC60"/>
    <property type="match status" value="1"/>
</dbReference>
<dbReference type="PANTHER" id="PTHR15415">
    <property type="entry name" value="MITOFILIN"/>
    <property type="match status" value="1"/>
</dbReference>
<dbReference type="Pfam" id="PF09731">
    <property type="entry name" value="Mitofilin"/>
    <property type="match status" value="2"/>
</dbReference>
<sequence>MLRNSIAPSRGLGSLARQRLTTSGRNLITKRSYVKGKSAAWPPGRSIASVLPARKTSCATFTTSATRGNEQNIRSPPSPSSASAISPEGISKPASSSPAGQTSPGSSVNSPEPPKAQTSAPPPPPPPPPPAPKAKGRFGRSLLYLVLTAGVAYAGGVWFSLRSDNFHDFFTEYVPYGEEAVLYFEELDFRRRFPNATRHINTRPAAPRDEGEKVTIPSKSGVSWKVAENEGTSDVTHKGRHMSAVDAEVPRTGGDAKSAPNKPTTEDKKDSEKTGSKKDESKERVPVTDTKKSTVSLDEPRKPAVATVASIEPLASLQDDPIIQELTKIVNGLIAVINADESASKLAAPIAKAKDDFLKLGEQISSIKKEAHAAAQEEIKNAHKEFERSATELVRRIDEVRSEEAAEYREEFETEREKLANSYQEKIKTEVERANAVAEQRLRNELVEQAIELNRKFLSDVDTLVEKERQGRFSKLSELSAQVAELEKLTAGWNEVIGANLTTQQLQVAVDAVHSALESESMPRPFINELLAVKSLAGQDPIVNAAISSINPTAYQRGIPSTAQIIDRFRRVANEVRKASLLPEDAGVASHATSYLMSKVMFKKEASSSGDDVESILTRTEKLLEQGNLDDAAREMNALRGWSKLLSKDWLADVRRVLEVRQALEVCFLSLLPTLSLLIYYNEC</sequence>
<keyword id="KW-0175">Coiled coil</keyword>
<keyword id="KW-0472">Membrane</keyword>
<keyword id="KW-0496">Mitochondrion</keyword>
<keyword id="KW-0999">Mitochondrion inner membrane</keyword>
<keyword id="KW-1185">Reference proteome</keyword>
<keyword id="KW-0809">Transit peptide</keyword>
<keyword id="KW-0812">Transmembrane</keyword>
<keyword id="KW-1133">Transmembrane helix</keyword>